<accession>Q3M704</accession>
<evidence type="ECO:0000255" key="1">
    <source>
        <dbReference type="HAMAP-Rule" id="MF_00600"/>
    </source>
</evidence>
<organism>
    <name type="scientific">Trichormus variabilis (strain ATCC 29413 / PCC 7937)</name>
    <name type="common">Anabaena variabilis</name>
    <dbReference type="NCBI Taxonomy" id="240292"/>
    <lineage>
        <taxon>Bacteria</taxon>
        <taxon>Bacillati</taxon>
        <taxon>Cyanobacteriota</taxon>
        <taxon>Cyanophyceae</taxon>
        <taxon>Nostocales</taxon>
        <taxon>Nostocaceae</taxon>
        <taxon>Trichormus</taxon>
    </lineage>
</organism>
<name>CH601_TRIV2</name>
<protein>
    <recommendedName>
        <fullName evidence="1">Chaperonin GroEL 1</fullName>
        <ecNumber evidence="1">5.6.1.7</ecNumber>
    </recommendedName>
    <alternativeName>
        <fullName evidence="1">60 kDa chaperonin 1</fullName>
    </alternativeName>
    <alternativeName>
        <fullName evidence="1">Chaperonin-60 1</fullName>
        <shortName evidence="1">Cpn60 1</shortName>
    </alternativeName>
</protein>
<reference key="1">
    <citation type="journal article" date="2014" name="Stand. Genomic Sci.">
        <title>Complete genome sequence of Anabaena variabilis ATCC 29413.</title>
        <authorList>
            <person name="Thiel T."/>
            <person name="Pratte B.S."/>
            <person name="Zhong J."/>
            <person name="Goodwin L."/>
            <person name="Copeland A."/>
            <person name="Lucas S."/>
            <person name="Han C."/>
            <person name="Pitluck S."/>
            <person name="Land M.L."/>
            <person name="Kyrpides N.C."/>
            <person name="Woyke T."/>
        </authorList>
    </citation>
    <scope>NUCLEOTIDE SEQUENCE [LARGE SCALE GENOMIC DNA]</scope>
    <source>
        <strain>ATCC 29413 / PCC 7937</strain>
    </source>
</reference>
<keyword id="KW-0067">ATP-binding</keyword>
<keyword id="KW-0143">Chaperone</keyword>
<keyword id="KW-0963">Cytoplasm</keyword>
<keyword id="KW-0413">Isomerase</keyword>
<keyword id="KW-0547">Nucleotide-binding</keyword>
<dbReference type="EC" id="5.6.1.7" evidence="1"/>
<dbReference type="EMBL" id="CP000117">
    <property type="protein sequence ID" value="ABA23232.1"/>
    <property type="molecule type" value="Genomic_DNA"/>
</dbReference>
<dbReference type="SMR" id="Q3M704"/>
<dbReference type="STRING" id="240292.Ava_3626"/>
<dbReference type="KEGG" id="ava:Ava_3626"/>
<dbReference type="eggNOG" id="COG0459">
    <property type="taxonomic scope" value="Bacteria"/>
</dbReference>
<dbReference type="HOGENOM" id="CLU_016503_3_0_3"/>
<dbReference type="Proteomes" id="UP000002533">
    <property type="component" value="Chromosome"/>
</dbReference>
<dbReference type="GO" id="GO:0005737">
    <property type="term" value="C:cytoplasm"/>
    <property type="evidence" value="ECO:0007669"/>
    <property type="project" value="UniProtKB-SubCell"/>
</dbReference>
<dbReference type="GO" id="GO:0005524">
    <property type="term" value="F:ATP binding"/>
    <property type="evidence" value="ECO:0007669"/>
    <property type="project" value="UniProtKB-UniRule"/>
</dbReference>
<dbReference type="GO" id="GO:0140662">
    <property type="term" value="F:ATP-dependent protein folding chaperone"/>
    <property type="evidence" value="ECO:0007669"/>
    <property type="project" value="InterPro"/>
</dbReference>
<dbReference type="GO" id="GO:0016853">
    <property type="term" value="F:isomerase activity"/>
    <property type="evidence" value="ECO:0007669"/>
    <property type="project" value="UniProtKB-KW"/>
</dbReference>
<dbReference type="GO" id="GO:0051082">
    <property type="term" value="F:unfolded protein binding"/>
    <property type="evidence" value="ECO:0007669"/>
    <property type="project" value="UniProtKB-UniRule"/>
</dbReference>
<dbReference type="GO" id="GO:0042026">
    <property type="term" value="P:protein refolding"/>
    <property type="evidence" value="ECO:0007669"/>
    <property type="project" value="UniProtKB-UniRule"/>
</dbReference>
<dbReference type="CDD" id="cd03344">
    <property type="entry name" value="GroEL"/>
    <property type="match status" value="1"/>
</dbReference>
<dbReference type="FunFam" id="3.50.7.10:FF:000001">
    <property type="entry name" value="60 kDa chaperonin"/>
    <property type="match status" value="1"/>
</dbReference>
<dbReference type="Gene3D" id="3.50.7.10">
    <property type="entry name" value="GroEL"/>
    <property type="match status" value="1"/>
</dbReference>
<dbReference type="Gene3D" id="1.10.560.10">
    <property type="entry name" value="GroEL-like equatorial domain"/>
    <property type="match status" value="1"/>
</dbReference>
<dbReference type="Gene3D" id="3.30.260.10">
    <property type="entry name" value="TCP-1-like chaperonin intermediate domain"/>
    <property type="match status" value="1"/>
</dbReference>
<dbReference type="HAMAP" id="MF_00600">
    <property type="entry name" value="CH60"/>
    <property type="match status" value="1"/>
</dbReference>
<dbReference type="InterPro" id="IPR018370">
    <property type="entry name" value="Chaperonin_Cpn60_CS"/>
</dbReference>
<dbReference type="InterPro" id="IPR001844">
    <property type="entry name" value="Cpn60/GroEL"/>
</dbReference>
<dbReference type="InterPro" id="IPR002423">
    <property type="entry name" value="Cpn60/GroEL/TCP-1"/>
</dbReference>
<dbReference type="InterPro" id="IPR027409">
    <property type="entry name" value="GroEL-like_apical_dom_sf"/>
</dbReference>
<dbReference type="InterPro" id="IPR027413">
    <property type="entry name" value="GROEL-like_equatorial_sf"/>
</dbReference>
<dbReference type="InterPro" id="IPR027410">
    <property type="entry name" value="TCP-1-like_intermed_sf"/>
</dbReference>
<dbReference type="NCBIfam" id="TIGR02348">
    <property type="entry name" value="GroEL"/>
    <property type="match status" value="1"/>
</dbReference>
<dbReference type="NCBIfam" id="NF000592">
    <property type="entry name" value="PRK00013.1"/>
    <property type="match status" value="1"/>
</dbReference>
<dbReference type="NCBIfam" id="NF009487">
    <property type="entry name" value="PRK12849.1"/>
    <property type="match status" value="1"/>
</dbReference>
<dbReference type="NCBIfam" id="NF009488">
    <property type="entry name" value="PRK12850.1"/>
    <property type="match status" value="1"/>
</dbReference>
<dbReference type="NCBIfam" id="NF009489">
    <property type="entry name" value="PRK12851.1"/>
    <property type="match status" value="1"/>
</dbReference>
<dbReference type="PANTHER" id="PTHR45633">
    <property type="entry name" value="60 KDA HEAT SHOCK PROTEIN, MITOCHONDRIAL"/>
    <property type="match status" value="1"/>
</dbReference>
<dbReference type="Pfam" id="PF00118">
    <property type="entry name" value="Cpn60_TCP1"/>
    <property type="match status" value="1"/>
</dbReference>
<dbReference type="PRINTS" id="PR00298">
    <property type="entry name" value="CHAPERONIN60"/>
</dbReference>
<dbReference type="SUPFAM" id="SSF52029">
    <property type="entry name" value="GroEL apical domain-like"/>
    <property type="match status" value="1"/>
</dbReference>
<dbReference type="SUPFAM" id="SSF48592">
    <property type="entry name" value="GroEL equatorial domain-like"/>
    <property type="match status" value="1"/>
</dbReference>
<dbReference type="SUPFAM" id="SSF54849">
    <property type="entry name" value="GroEL-intermediate domain like"/>
    <property type="match status" value="1"/>
</dbReference>
<dbReference type="PROSITE" id="PS00296">
    <property type="entry name" value="CHAPERONINS_CPN60"/>
    <property type="match status" value="1"/>
</dbReference>
<comment type="function">
    <text evidence="1">Together with its co-chaperonin GroES, plays an essential role in assisting protein folding. The GroEL-GroES system forms a nano-cage that allows encapsulation of the non-native substrate proteins and provides a physical environment optimized to promote and accelerate protein folding.</text>
</comment>
<comment type="catalytic activity">
    <reaction evidence="1">
        <text>ATP + H2O + a folded polypeptide = ADP + phosphate + an unfolded polypeptide.</text>
        <dbReference type="EC" id="5.6.1.7"/>
    </reaction>
</comment>
<comment type="subunit">
    <text evidence="1">Forms a cylinder of 14 subunits composed of two heptameric rings stacked back-to-back. Interacts with the co-chaperonin GroES.</text>
</comment>
<comment type="subcellular location">
    <subcellularLocation>
        <location evidence="1">Cytoplasm</location>
    </subcellularLocation>
</comment>
<comment type="similarity">
    <text evidence="1">Belongs to the chaperonin (HSP60) family.</text>
</comment>
<proteinExistence type="inferred from homology"/>
<sequence>MAKRIIYNENARRALERGIDILAEAVAVTLGPKGRNVVLEKKFGAPQIVNDGVTIAKEIELEDHIENTGVALIRQAASKTNDAAGDGTTTATVLAHAIVKEGLRNVAAGANAILLKRGIDKATGFLVDRIKEHARPVEDSKSIAQVGSISAGNDDEVGQMIAEAMDKVGKEGVISLEEGKSVTTELEITEGMRFDKGYISPYFATDPERMEAIFDEPFLLLTDKKIALVQDLVPVLEQVARAGRPLVIIAEDIEKEALATLVVNRLRGVLNVAAVKAPGFGDRRKAMLEDIAILTGGQLITEDAGLKLENTKLESLGKARRITITKDSTTIVAEGNDVAVKGRVEQIRRQMEETESSYDKEKLQERLAKLSGGVAVVKVGAATETEMKDKKLRLEDAINATKAAVEEGIVPGGGTTLAHLTPELEVWANSNLKDEELTGALIVARALPAPLKRIAENAGQNGAVIAERVKEKAFNVGFNAATNEFVDMFEAGIVDPAKVTRSALQNAASIAGMVLTTECIVVDKPEPKDAAPAGAGAGGGDFDY</sequence>
<gene>
    <name evidence="1" type="primary">groEL1</name>
    <name evidence="1" type="synonym">groL1</name>
    <name type="ordered locus">Ava_3626</name>
</gene>
<feature type="chain" id="PRO_0000256868" description="Chaperonin GroEL 1">
    <location>
        <begin position="1"/>
        <end position="544"/>
    </location>
</feature>
<feature type="binding site" evidence="1">
    <location>
        <begin position="29"/>
        <end position="32"/>
    </location>
    <ligand>
        <name>ATP</name>
        <dbReference type="ChEBI" id="CHEBI:30616"/>
    </ligand>
</feature>
<feature type="binding site" evidence="1">
    <location>
        <begin position="86"/>
        <end position="90"/>
    </location>
    <ligand>
        <name>ATP</name>
        <dbReference type="ChEBI" id="CHEBI:30616"/>
    </ligand>
</feature>
<feature type="binding site" evidence="1">
    <location>
        <position position="413"/>
    </location>
    <ligand>
        <name>ATP</name>
        <dbReference type="ChEBI" id="CHEBI:30616"/>
    </ligand>
</feature>
<feature type="binding site" evidence="1">
    <location>
        <begin position="479"/>
        <end position="481"/>
    </location>
    <ligand>
        <name>ATP</name>
        <dbReference type="ChEBI" id="CHEBI:30616"/>
    </ligand>
</feature>
<feature type="binding site" evidence="1">
    <location>
        <position position="495"/>
    </location>
    <ligand>
        <name>ATP</name>
        <dbReference type="ChEBI" id="CHEBI:30616"/>
    </ligand>
</feature>